<keyword id="KW-0560">Oxidoreductase</keyword>
<keyword id="KW-0819">tRNA processing</keyword>
<feature type="chain" id="PRO_0000161440" description="tRNA uridine(34) hydroxylase">
    <location>
        <begin position="1"/>
        <end position="319"/>
    </location>
</feature>
<feature type="domain" description="Rhodanese" evidence="1">
    <location>
        <begin position="127"/>
        <end position="221"/>
    </location>
</feature>
<feature type="active site" description="Cysteine persulfide intermediate" evidence="1">
    <location>
        <position position="181"/>
    </location>
</feature>
<dbReference type="EC" id="1.14.-.-" evidence="1"/>
<dbReference type="EMBL" id="CP000001">
    <property type="protein sequence ID" value="AAU18558.1"/>
    <property type="molecule type" value="Genomic_DNA"/>
</dbReference>
<dbReference type="RefSeq" id="WP_000246230.1">
    <property type="nucleotide sequence ID" value="NZ_CP009968.1"/>
</dbReference>
<dbReference type="SMR" id="Q63CS8"/>
<dbReference type="KEGG" id="bcz:BCE33L1694"/>
<dbReference type="PATRIC" id="fig|288681.22.peg.3846"/>
<dbReference type="Proteomes" id="UP000002612">
    <property type="component" value="Chromosome"/>
</dbReference>
<dbReference type="GO" id="GO:0016705">
    <property type="term" value="F:oxidoreductase activity, acting on paired donors, with incorporation or reduction of molecular oxygen"/>
    <property type="evidence" value="ECO:0007669"/>
    <property type="project" value="UniProtKB-UniRule"/>
</dbReference>
<dbReference type="GO" id="GO:0006400">
    <property type="term" value="P:tRNA modification"/>
    <property type="evidence" value="ECO:0007669"/>
    <property type="project" value="UniProtKB-UniRule"/>
</dbReference>
<dbReference type="CDD" id="cd01518">
    <property type="entry name" value="RHOD_YceA"/>
    <property type="match status" value="1"/>
</dbReference>
<dbReference type="Gene3D" id="3.30.70.100">
    <property type="match status" value="1"/>
</dbReference>
<dbReference type="Gene3D" id="3.40.250.10">
    <property type="entry name" value="Rhodanese-like domain"/>
    <property type="match status" value="1"/>
</dbReference>
<dbReference type="HAMAP" id="MF_00469">
    <property type="entry name" value="TrhO"/>
    <property type="match status" value="1"/>
</dbReference>
<dbReference type="InterPro" id="IPR001763">
    <property type="entry name" value="Rhodanese-like_dom"/>
</dbReference>
<dbReference type="InterPro" id="IPR036873">
    <property type="entry name" value="Rhodanese-like_dom_sf"/>
</dbReference>
<dbReference type="InterPro" id="IPR022111">
    <property type="entry name" value="Rhodanese_C"/>
</dbReference>
<dbReference type="InterPro" id="IPR020936">
    <property type="entry name" value="TrhO"/>
</dbReference>
<dbReference type="InterPro" id="IPR040503">
    <property type="entry name" value="TRHO_N"/>
</dbReference>
<dbReference type="NCBIfam" id="NF001135">
    <property type="entry name" value="PRK00142.1-3"/>
    <property type="match status" value="1"/>
</dbReference>
<dbReference type="PANTHER" id="PTHR43268:SF3">
    <property type="entry name" value="RHODANESE-LIKE DOMAIN-CONTAINING PROTEIN 7-RELATED"/>
    <property type="match status" value="1"/>
</dbReference>
<dbReference type="PANTHER" id="PTHR43268">
    <property type="entry name" value="THIOSULFATE SULFURTRANSFERASE/RHODANESE-LIKE DOMAIN-CONTAINING PROTEIN 2"/>
    <property type="match status" value="1"/>
</dbReference>
<dbReference type="Pfam" id="PF00581">
    <property type="entry name" value="Rhodanese"/>
    <property type="match status" value="1"/>
</dbReference>
<dbReference type="Pfam" id="PF12368">
    <property type="entry name" value="Rhodanese_C"/>
    <property type="match status" value="1"/>
</dbReference>
<dbReference type="Pfam" id="PF17773">
    <property type="entry name" value="UPF0176_N"/>
    <property type="match status" value="1"/>
</dbReference>
<dbReference type="SMART" id="SM00450">
    <property type="entry name" value="RHOD"/>
    <property type="match status" value="1"/>
</dbReference>
<dbReference type="SUPFAM" id="SSF52821">
    <property type="entry name" value="Rhodanese/Cell cycle control phosphatase"/>
    <property type="match status" value="1"/>
</dbReference>
<dbReference type="PROSITE" id="PS50206">
    <property type="entry name" value="RHODANESE_3"/>
    <property type="match status" value="1"/>
</dbReference>
<gene>
    <name evidence="1" type="primary">trhO</name>
    <name type="ordered locus">BCE33L1694</name>
</gene>
<protein>
    <recommendedName>
        <fullName evidence="1">tRNA uridine(34) hydroxylase</fullName>
        <ecNumber evidence="1">1.14.-.-</ecNumber>
    </recommendedName>
    <alternativeName>
        <fullName evidence="1">tRNA hydroxylation protein O</fullName>
    </alternativeName>
</protein>
<comment type="function">
    <text evidence="1">Catalyzes oxygen-dependent 5-hydroxyuridine (ho5U) modification at position 34 in tRNAs.</text>
</comment>
<comment type="catalytic activity">
    <reaction evidence="1">
        <text>uridine(34) in tRNA + AH2 + O2 = 5-hydroxyuridine(34) in tRNA + A + H2O</text>
        <dbReference type="Rhea" id="RHEA:64224"/>
        <dbReference type="Rhea" id="RHEA-COMP:11727"/>
        <dbReference type="Rhea" id="RHEA-COMP:13381"/>
        <dbReference type="ChEBI" id="CHEBI:13193"/>
        <dbReference type="ChEBI" id="CHEBI:15377"/>
        <dbReference type="ChEBI" id="CHEBI:15379"/>
        <dbReference type="ChEBI" id="CHEBI:17499"/>
        <dbReference type="ChEBI" id="CHEBI:65315"/>
        <dbReference type="ChEBI" id="CHEBI:136877"/>
    </reaction>
</comment>
<comment type="similarity">
    <text evidence="1">Belongs to the TrhO family.</text>
</comment>
<evidence type="ECO:0000255" key="1">
    <source>
        <dbReference type="HAMAP-Rule" id="MF_00469"/>
    </source>
</evidence>
<name>TRHO_BACCZ</name>
<accession>Q63CS8</accession>
<organism>
    <name type="scientific">Bacillus cereus (strain ZK / E33L)</name>
    <dbReference type="NCBI Taxonomy" id="288681"/>
    <lineage>
        <taxon>Bacteria</taxon>
        <taxon>Bacillati</taxon>
        <taxon>Bacillota</taxon>
        <taxon>Bacilli</taxon>
        <taxon>Bacillales</taxon>
        <taxon>Bacillaceae</taxon>
        <taxon>Bacillus</taxon>
        <taxon>Bacillus cereus group</taxon>
    </lineage>
</organism>
<reference key="1">
    <citation type="journal article" date="2006" name="J. Bacteriol.">
        <title>Pathogenomic sequence analysis of Bacillus cereus and Bacillus thuringiensis isolates closely related to Bacillus anthracis.</title>
        <authorList>
            <person name="Han C.S."/>
            <person name="Xie G."/>
            <person name="Challacombe J.F."/>
            <person name="Altherr M.R."/>
            <person name="Bhotika S.S."/>
            <person name="Bruce D."/>
            <person name="Campbell C.S."/>
            <person name="Campbell M.L."/>
            <person name="Chen J."/>
            <person name="Chertkov O."/>
            <person name="Cleland C."/>
            <person name="Dimitrijevic M."/>
            <person name="Doggett N.A."/>
            <person name="Fawcett J.J."/>
            <person name="Glavina T."/>
            <person name="Goodwin L.A."/>
            <person name="Hill K.K."/>
            <person name="Hitchcock P."/>
            <person name="Jackson P.J."/>
            <person name="Keim P."/>
            <person name="Kewalramani A.R."/>
            <person name="Longmire J."/>
            <person name="Lucas S."/>
            <person name="Malfatti S."/>
            <person name="McMurry K."/>
            <person name="Meincke L.J."/>
            <person name="Misra M."/>
            <person name="Moseman B.L."/>
            <person name="Mundt M."/>
            <person name="Munk A.C."/>
            <person name="Okinaka R.T."/>
            <person name="Parson-Quintana B."/>
            <person name="Reilly L.P."/>
            <person name="Richardson P."/>
            <person name="Robinson D.L."/>
            <person name="Rubin E."/>
            <person name="Saunders E."/>
            <person name="Tapia R."/>
            <person name="Tesmer J.G."/>
            <person name="Thayer N."/>
            <person name="Thompson L.S."/>
            <person name="Tice H."/>
            <person name="Ticknor L.O."/>
            <person name="Wills P.L."/>
            <person name="Brettin T.S."/>
            <person name="Gilna P."/>
        </authorList>
    </citation>
    <scope>NUCLEOTIDE SEQUENCE [LARGE SCALE GENOMIC DNA]</scope>
    <source>
        <strain>ZK / E33L</strain>
    </source>
</reference>
<proteinExistence type="inferred from homology"/>
<sequence length="319" mass="36760">MATTKPYRVLLYYMYTTIENPEEFAAEHLEFCNSLELKGRILVAKEGINGTCSGTVEQTEKYMEAMNNDPRFDGIVFKIDEADGHAFKKMHVRPRPELVTLRLEDDINPHEITGKYLEPKDFYEAMKQEDTVIIDARNDYEFDLGHFKGAIKPDIESFRELPDWIRENKEVLEGKKILTYCTGGIRCEKFSGWLVREGYEDVSQLHGGIVTYGKDPEVQGELWDGQCYVFDERIAVPVNQKEHVIVGKDHFTGEPCERYVNCANPECNKKILCSEENEAKYLRACSHECRVSPRNRYVIQHELTEEQVAAALEQIEAGK</sequence>